<comment type="subcellular location">
    <subcellularLocation>
        <location evidence="1">Nucleus inner membrane</location>
        <topology evidence="3">Multi-pass membrane protein</topology>
    </subcellularLocation>
</comment>
<comment type="similarity">
    <text evidence="5">Belongs to the ARL6IP6 family.</text>
</comment>
<dbReference type="EMBL" id="BC079329">
    <property type="protein sequence ID" value="AAH79329.1"/>
    <property type="molecule type" value="mRNA"/>
</dbReference>
<dbReference type="RefSeq" id="NP_001019481.1">
    <property type="nucleotide sequence ID" value="NM_001024310.1"/>
</dbReference>
<dbReference type="FunCoup" id="Q68FV2">
    <property type="interactions" value="2361"/>
</dbReference>
<dbReference type="STRING" id="10116.ENSRNOP00000006774"/>
<dbReference type="GlyGen" id="Q68FV2">
    <property type="glycosylation" value="1 site"/>
</dbReference>
<dbReference type="iPTMnet" id="Q68FV2"/>
<dbReference type="PhosphoSitePlus" id="Q68FV2"/>
<dbReference type="PaxDb" id="10116-ENSRNOP00000006774"/>
<dbReference type="Ensembl" id="ENSRNOT00000006774.7">
    <property type="protein sequence ID" value="ENSRNOP00000006774.4"/>
    <property type="gene ID" value="ENSRNOG00000005074.7"/>
</dbReference>
<dbReference type="GeneID" id="499798"/>
<dbReference type="KEGG" id="rno:499798"/>
<dbReference type="UCSC" id="RGD:1564819">
    <property type="organism name" value="rat"/>
</dbReference>
<dbReference type="AGR" id="RGD:1564819"/>
<dbReference type="CTD" id="151188"/>
<dbReference type="RGD" id="1564819">
    <property type="gene designation" value="Arl6ip6"/>
</dbReference>
<dbReference type="eggNOG" id="ENOG502S1PC">
    <property type="taxonomic scope" value="Eukaryota"/>
</dbReference>
<dbReference type="GeneTree" id="ENSGT00390000009987"/>
<dbReference type="HOGENOM" id="CLU_1229535_0_0_1"/>
<dbReference type="InParanoid" id="Q68FV2"/>
<dbReference type="OMA" id="TVAWCLL"/>
<dbReference type="OrthoDB" id="10070125at2759"/>
<dbReference type="PhylomeDB" id="Q68FV2"/>
<dbReference type="TreeFam" id="TF324669"/>
<dbReference type="PRO" id="PR:Q68FV2"/>
<dbReference type="Proteomes" id="UP000002494">
    <property type="component" value="Chromosome 3"/>
</dbReference>
<dbReference type="Bgee" id="ENSRNOG00000005074">
    <property type="expression patterns" value="Expressed in thymus and 19 other cell types or tissues"/>
</dbReference>
<dbReference type="GO" id="GO:0005637">
    <property type="term" value="C:nuclear inner membrane"/>
    <property type="evidence" value="ECO:0000250"/>
    <property type="project" value="UniProtKB"/>
</dbReference>
<dbReference type="InterPro" id="IPR029383">
    <property type="entry name" value="ARL6IP6"/>
</dbReference>
<dbReference type="PANTHER" id="PTHR28640">
    <property type="entry name" value="ADP-RIBOSYLATION FACTOR-LIKE PROTEIN 6-INTERACTING PROTEIN 6"/>
    <property type="match status" value="1"/>
</dbReference>
<dbReference type="PANTHER" id="PTHR28640:SF1">
    <property type="entry name" value="ADP-RIBOSYLATION FACTOR-LIKE PROTEIN 6-INTERACTING PROTEIN 6"/>
    <property type="match status" value="1"/>
</dbReference>
<dbReference type="Pfam" id="PF15062">
    <property type="entry name" value="ARL6IP6"/>
    <property type="match status" value="1"/>
</dbReference>
<reference key="1">
    <citation type="journal article" date="2004" name="Genome Res.">
        <title>The status, quality, and expansion of the NIH full-length cDNA project: the Mammalian Gene Collection (MGC).</title>
        <authorList>
            <consortium name="The MGC Project Team"/>
        </authorList>
    </citation>
    <scope>NUCLEOTIDE SEQUENCE [LARGE SCALE MRNA]</scope>
    <source>
        <tissue>Lung</tissue>
    </source>
</reference>
<reference key="2">
    <citation type="journal article" date="2012" name="Nat. Commun.">
        <title>Quantitative maps of protein phosphorylation sites across 14 different rat organs and tissues.</title>
        <authorList>
            <person name="Lundby A."/>
            <person name="Secher A."/>
            <person name="Lage K."/>
            <person name="Nordsborg N.B."/>
            <person name="Dmytriyev A."/>
            <person name="Lundby C."/>
            <person name="Olsen J.V."/>
        </authorList>
    </citation>
    <scope>PHOSPHORYLATION [LARGE SCALE ANALYSIS] AT SER-77</scope>
    <scope>IDENTIFICATION BY MASS SPECTROMETRY [LARGE SCALE ANALYSIS]</scope>
</reference>
<organism>
    <name type="scientific">Rattus norvegicus</name>
    <name type="common">Rat</name>
    <dbReference type="NCBI Taxonomy" id="10116"/>
    <lineage>
        <taxon>Eukaryota</taxon>
        <taxon>Metazoa</taxon>
        <taxon>Chordata</taxon>
        <taxon>Craniata</taxon>
        <taxon>Vertebrata</taxon>
        <taxon>Euteleostomi</taxon>
        <taxon>Mammalia</taxon>
        <taxon>Eutheria</taxon>
        <taxon>Euarchontoglires</taxon>
        <taxon>Glires</taxon>
        <taxon>Rodentia</taxon>
        <taxon>Myomorpha</taxon>
        <taxon>Muroidea</taxon>
        <taxon>Muridae</taxon>
        <taxon>Murinae</taxon>
        <taxon>Rattus</taxon>
    </lineage>
</organism>
<accession>Q68FV2</accession>
<keyword id="KW-0472">Membrane</keyword>
<keyword id="KW-0539">Nucleus</keyword>
<keyword id="KW-0597">Phosphoprotein</keyword>
<keyword id="KW-1185">Reference proteome</keyword>
<keyword id="KW-0812">Transmembrane</keyword>
<keyword id="KW-1133">Transmembrane helix</keyword>
<sequence>MSFVESWRSVGPRRRRQVTPGPVTRSVYSDYTQGNSWSEDGDEGCDQVARDLRAEFSARASSESKRAPLLPRIGDGSPVLPDKRNGIFPATAAKRTQARRWPIQALSILCSLLFAVLLAFLLAIAYLIVKELHTENSKNEDVVDTGLLGFWSLLIISLTAGLSCCSFSWTVTYFDSFEPGMFPPTPLSPARFKKLTGHSFHMGYSMAILNGVVAALTVAWCLM</sequence>
<name>AR6P6_RAT</name>
<proteinExistence type="evidence at protein level"/>
<protein>
    <recommendedName>
        <fullName>ADP-ribosylation factor-like protein 6-interacting protein 6</fullName>
        <shortName>ARL-6-interacting protein 6</shortName>
        <shortName>Aip-6</shortName>
    </recommendedName>
</protein>
<feature type="chain" id="PRO_0000307326" description="ADP-ribosylation factor-like protein 6-interacting protein 6">
    <location>
        <begin position="1"/>
        <end position="223"/>
    </location>
</feature>
<feature type="transmembrane region" description="Helical" evidence="3">
    <location>
        <begin position="108"/>
        <end position="128"/>
    </location>
</feature>
<feature type="transmembrane region" description="Helical" evidence="3">
    <location>
        <begin position="142"/>
        <end position="162"/>
    </location>
</feature>
<feature type="transmembrane region" description="Helical" evidence="3">
    <location>
        <begin position="202"/>
        <end position="222"/>
    </location>
</feature>
<feature type="region of interest" description="Disordered" evidence="4">
    <location>
        <begin position="1"/>
        <end position="44"/>
    </location>
</feature>
<feature type="compositionally biased region" description="Polar residues" evidence="4">
    <location>
        <begin position="26"/>
        <end position="38"/>
    </location>
</feature>
<feature type="modified residue" description="Phosphoserine" evidence="2">
    <location>
        <position position="2"/>
    </location>
</feature>
<feature type="modified residue" description="Phosphoserine" evidence="2">
    <location>
        <position position="36"/>
    </location>
</feature>
<feature type="modified residue" description="Phosphoserine" evidence="2">
    <location>
        <position position="57"/>
    </location>
</feature>
<feature type="modified residue" description="Phosphoserine" evidence="2">
    <location>
        <position position="62"/>
    </location>
</feature>
<feature type="modified residue" description="Phosphoserine" evidence="6">
    <location>
        <position position="77"/>
    </location>
</feature>
<evidence type="ECO:0000250" key="1">
    <source>
        <dbReference type="UniProtKB" id="Q8BH07"/>
    </source>
</evidence>
<evidence type="ECO:0000250" key="2">
    <source>
        <dbReference type="UniProtKB" id="Q8N6S5"/>
    </source>
</evidence>
<evidence type="ECO:0000255" key="3"/>
<evidence type="ECO:0000256" key="4">
    <source>
        <dbReference type="SAM" id="MobiDB-lite"/>
    </source>
</evidence>
<evidence type="ECO:0000305" key="5"/>
<evidence type="ECO:0007744" key="6">
    <source>
    </source>
</evidence>
<gene>
    <name type="primary">Arl6ip6</name>
</gene>